<comment type="similarity">
    <text evidence="1">Belongs to the bacterial ribosomal protein bS21 family.</text>
</comment>
<reference key="1">
    <citation type="journal article" date="2005" name="Genome Res.">
        <title>Coping with cold: the genome of the versatile marine Antarctica bacterium Pseudoalteromonas haloplanktis TAC125.</title>
        <authorList>
            <person name="Medigue C."/>
            <person name="Krin E."/>
            <person name="Pascal G."/>
            <person name="Barbe V."/>
            <person name="Bernsel A."/>
            <person name="Bertin P.N."/>
            <person name="Cheung F."/>
            <person name="Cruveiller S."/>
            <person name="D'Amico S."/>
            <person name="Duilio A."/>
            <person name="Fang G."/>
            <person name="Feller G."/>
            <person name="Ho C."/>
            <person name="Mangenot S."/>
            <person name="Marino G."/>
            <person name="Nilsson J."/>
            <person name="Parrilli E."/>
            <person name="Rocha E.P.C."/>
            <person name="Rouy Z."/>
            <person name="Sekowska A."/>
            <person name="Tutino M.L."/>
            <person name="Vallenet D."/>
            <person name="von Heijne G."/>
            <person name="Danchin A."/>
        </authorList>
    </citation>
    <scope>NUCLEOTIDE SEQUENCE [LARGE SCALE GENOMIC DNA]</scope>
    <source>
        <strain>TAC 125</strain>
    </source>
</reference>
<keyword id="KW-1185">Reference proteome</keyword>
<keyword id="KW-0687">Ribonucleoprotein</keyword>
<keyword id="KW-0689">Ribosomal protein</keyword>
<name>RS21_PSET1</name>
<feature type="chain" id="PRO_0000266734" description="Small ribosomal subunit protein bS21">
    <location>
        <begin position="1"/>
        <end position="71"/>
    </location>
</feature>
<feature type="region of interest" description="Disordered" evidence="2">
    <location>
        <begin position="37"/>
        <end position="71"/>
    </location>
</feature>
<feature type="compositionally biased region" description="Basic residues" evidence="2">
    <location>
        <begin position="45"/>
        <end position="59"/>
    </location>
</feature>
<feature type="compositionally biased region" description="Basic and acidic residues" evidence="2">
    <location>
        <begin position="60"/>
        <end position="71"/>
    </location>
</feature>
<accession>Q3IIB6</accession>
<dbReference type="EMBL" id="CR954246">
    <property type="protein sequence ID" value="CAI85450.1"/>
    <property type="molecule type" value="Genomic_DNA"/>
</dbReference>
<dbReference type="SMR" id="Q3IIB6"/>
<dbReference type="STRING" id="326442.PSHAa0352"/>
<dbReference type="KEGG" id="pha:PSHAa0352"/>
<dbReference type="eggNOG" id="COG0828">
    <property type="taxonomic scope" value="Bacteria"/>
</dbReference>
<dbReference type="HOGENOM" id="CLU_159258_1_0_6"/>
<dbReference type="BioCyc" id="PHAL326442:PSHA_RS01735-MONOMER"/>
<dbReference type="Proteomes" id="UP000006843">
    <property type="component" value="Chromosome I"/>
</dbReference>
<dbReference type="GO" id="GO:1990904">
    <property type="term" value="C:ribonucleoprotein complex"/>
    <property type="evidence" value="ECO:0007669"/>
    <property type="project" value="UniProtKB-KW"/>
</dbReference>
<dbReference type="GO" id="GO:0005840">
    <property type="term" value="C:ribosome"/>
    <property type="evidence" value="ECO:0007669"/>
    <property type="project" value="UniProtKB-KW"/>
</dbReference>
<dbReference type="GO" id="GO:0003735">
    <property type="term" value="F:structural constituent of ribosome"/>
    <property type="evidence" value="ECO:0007669"/>
    <property type="project" value="InterPro"/>
</dbReference>
<dbReference type="GO" id="GO:0006412">
    <property type="term" value="P:translation"/>
    <property type="evidence" value="ECO:0007669"/>
    <property type="project" value="UniProtKB-UniRule"/>
</dbReference>
<dbReference type="Gene3D" id="1.20.5.1150">
    <property type="entry name" value="Ribosomal protein S8"/>
    <property type="match status" value="1"/>
</dbReference>
<dbReference type="HAMAP" id="MF_00358">
    <property type="entry name" value="Ribosomal_bS21"/>
    <property type="match status" value="1"/>
</dbReference>
<dbReference type="InterPro" id="IPR001911">
    <property type="entry name" value="Ribosomal_bS21"/>
</dbReference>
<dbReference type="InterPro" id="IPR018278">
    <property type="entry name" value="Ribosomal_bS21_CS"/>
</dbReference>
<dbReference type="InterPro" id="IPR038380">
    <property type="entry name" value="Ribosomal_bS21_sf"/>
</dbReference>
<dbReference type="NCBIfam" id="TIGR00030">
    <property type="entry name" value="S21p"/>
    <property type="match status" value="1"/>
</dbReference>
<dbReference type="PANTHER" id="PTHR21109">
    <property type="entry name" value="MITOCHONDRIAL 28S RIBOSOMAL PROTEIN S21"/>
    <property type="match status" value="1"/>
</dbReference>
<dbReference type="PANTHER" id="PTHR21109:SF22">
    <property type="entry name" value="SMALL RIBOSOMAL SUBUNIT PROTEIN BS21"/>
    <property type="match status" value="1"/>
</dbReference>
<dbReference type="Pfam" id="PF01165">
    <property type="entry name" value="Ribosomal_S21"/>
    <property type="match status" value="1"/>
</dbReference>
<dbReference type="PRINTS" id="PR00976">
    <property type="entry name" value="RIBOSOMALS21"/>
</dbReference>
<dbReference type="PROSITE" id="PS01181">
    <property type="entry name" value="RIBOSOMAL_S21"/>
    <property type="match status" value="1"/>
</dbReference>
<organism>
    <name type="scientific">Pseudoalteromonas translucida (strain TAC 125)</name>
    <dbReference type="NCBI Taxonomy" id="326442"/>
    <lineage>
        <taxon>Bacteria</taxon>
        <taxon>Pseudomonadati</taxon>
        <taxon>Pseudomonadota</taxon>
        <taxon>Gammaproteobacteria</taxon>
        <taxon>Alteromonadales</taxon>
        <taxon>Pseudoalteromonadaceae</taxon>
        <taxon>Pseudoalteromonas</taxon>
    </lineage>
</organism>
<evidence type="ECO:0000255" key="1">
    <source>
        <dbReference type="HAMAP-Rule" id="MF_00358"/>
    </source>
</evidence>
<evidence type="ECO:0000256" key="2">
    <source>
        <dbReference type="SAM" id="MobiDB-lite"/>
    </source>
</evidence>
<evidence type="ECO:0000305" key="3"/>
<sequence length="71" mass="8563">MPVIKVRENEPFDVALRRFKRSCEKAGILSEVRRREHYEKPTAERKRKKAAAVKRHMKKLSRDNARRVKLY</sequence>
<proteinExistence type="inferred from homology"/>
<protein>
    <recommendedName>
        <fullName evidence="1">Small ribosomal subunit protein bS21</fullName>
    </recommendedName>
    <alternativeName>
        <fullName evidence="3">30S ribosomal protein S21</fullName>
    </alternativeName>
</protein>
<gene>
    <name evidence="1" type="primary">rpsU</name>
    <name type="ordered locus">PSHAa0352</name>
</gene>